<gene>
    <name evidence="1" type="primary">gltX</name>
    <name type="ordered locus">CFPG_165</name>
</gene>
<proteinExistence type="inferred from homology"/>
<sequence length="494" mass="57262">MKARVRFAPSPTGPLHIGSIRTALYNYLFAKKYHGDFILRIEDTDSTRFIPGAEEYIIETFKWLGITFDEGPYRQSERKAIYKEYVDELLNKNLAYIAFDTPEELEAKRRNIPNFQYDAITRMTMNNSLTLSKEETKKRIANSNQYVVRIKIDPNQTIIVNDLIRGEMSISSSTLDDKVLYKSSDNLPTYHLANIVDDHLMKITHVIRGEEWLSSTPLHIILYQYFGWGEKMPVFAHLPLLLKPDGKGKLSKRDGERFGFPIFPLQWTDSKTGKSISGYREDGYLPEALINFLALLGWNPGSEQEFFSIDELSVLFSLKKCSKNGAKFDYKKVEWFNHQYIQKKSDKEIAELFFHFYSKKLEKQDFKKITEVIGMVKGRISSIRDLWYETAFFFVAPNTYDEKIVQKRWRAESPIQLTELSELLATITNFSLQIVEKTIRGWINNKGYHPSNIMNACRLALVGTAKGPGIFHIIEILGKEEVIIRIKKAIQVLR</sequence>
<accession>B6YQF6</accession>
<evidence type="ECO:0000255" key="1">
    <source>
        <dbReference type="HAMAP-Rule" id="MF_00022"/>
    </source>
</evidence>
<organism>
    <name type="scientific">Azobacteroides pseudotrichonymphae genomovar. CFP2</name>
    <dbReference type="NCBI Taxonomy" id="511995"/>
    <lineage>
        <taxon>Bacteria</taxon>
        <taxon>Pseudomonadati</taxon>
        <taxon>Bacteroidota</taxon>
        <taxon>Bacteroidia</taxon>
        <taxon>Bacteroidales</taxon>
        <taxon>Candidatus Azobacteroides</taxon>
    </lineage>
</organism>
<dbReference type="EC" id="6.1.1.17" evidence="1"/>
<dbReference type="EMBL" id="AP010656">
    <property type="protein sequence ID" value="BAG83428.1"/>
    <property type="molecule type" value="Genomic_DNA"/>
</dbReference>
<dbReference type="RefSeq" id="WP_012573189.1">
    <property type="nucleotide sequence ID" value="NC_011565.1"/>
</dbReference>
<dbReference type="SMR" id="B6YQF6"/>
<dbReference type="STRING" id="511995.CFPG_165"/>
<dbReference type="KEGG" id="aps:CFPG_165"/>
<dbReference type="eggNOG" id="COG0008">
    <property type="taxonomic scope" value="Bacteria"/>
</dbReference>
<dbReference type="HOGENOM" id="CLU_015768_6_3_10"/>
<dbReference type="OrthoDB" id="9807503at2"/>
<dbReference type="Proteomes" id="UP000000723">
    <property type="component" value="Chromosome"/>
</dbReference>
<dbReference type="GO" id="GO:0005829">
    <property type="term" value="C:cytosol"/>
    <property type="evidence" value="ECO:0007669"/>
    <property type="project" value="TreeGrafter"/>
</dbReference>
<dbReference type="GO" id="GO:0005524">
    <property type="term" value="F:ATP binding"/>
    <property type="evidence" value="ECO:0007669"/>
    <property type="project" value="UniProtKB-UniRule"/>
</dbReference>
<dbReference type="GO" id="GO:0004818">
    <property type="term" value="F:glutamate-tRNA ligase activity"/>
    <property type="evidence" value="ECO:0007669"/>
    <property type="project" value="UniProtKB-UniRule"/>
</dbReference>
<dbReference type="GO" id="GO:0000049">
    <property type="term" value="F:tRNA binding"/>
    <property type="evidence" value="ECO:0007669"/>
    <property type="project" value="InterPro"/>
</dbReference>
<dbReference type="GO" id="GO:0008270">
    <property type="term" value="F:zinc ion binding"/>
    <property type="evidence" value="ECO:0007669"/>
    <property type="project" value="InterPro"/>
</dbReference>
<dbReference type="GO" id="GO:0006424">
    <property type="term" value="P:glutamyl-tRNA aminoacylation"/>
    <property type="evidence" value="ECO:0007669"/>
    <property type="project" value="UniProtKB-UniRule"/>
</dbReference>
<dbReference type="CDD" id="cd00808">
    <property type="entry name" value="GluRS_core"/>
    <property type="match status" value="1"/>
</dbReference>
<dbReference type="FunFam" id="3.40.50.620:FF:000127">
    <property type="entry name" value="Glutamate--tRNA ligase"/>
    <property type="match status" value="1"/>
</dbReference>
<dbReference type="Gene3D" id="1.10.10.350">
    <property type="match status" value="1"/>
</dbReference>
<dbReference type="Gene3D" id="1.10.1160.10">
    <property type="entry name" value="Glutamyl-trna Synthetase, Domain 2"/>
    <property type="match status" value="1"/>
</dbReference>
<dbReference type="Gene3D" id="3.90.800.10">
    <property type="entry name" value="Glutamyl-tRNA Synthetase, Domain 3"/>
    <property type="match status" value="1"/>
</dbReference>
<dbReference type="Gene3D" id="3.40.50.620">
    <property type="entry name" value="HUPs"/>
    <property type="match status" value="1"/>
</dbReference>
<dbReference type="HAMAP" id="MF_00022">
    <property type="entry name" value="Glu_tRNA_synth_type1"/>
    <property type="match status" value="1"/>
</dbReference>
<dbReference type="InterPro" id="IPR045462">
    <property type="entry name" value="aa-tRNA-synth_I_cd-bd"/>
</dbReference>
<dbReference type="InterPro" id="IPR020751">
    <property type="entry name" value="aa-tRNA-synth_I_codon-bd_sub2"/>
</dbReference>
<dbReference type="InterPro" id="IPR008925">
    <property type="entry name" value="aa_tRNA-synth_I_cd-bd_sf"/>
</dbReference>
<dbReference type="InterPro" id="IPR004527">
    <property type="entry name" value="Glu-tRNA-ligase_bac/mito"/>
</dbReference>
<dbReference type="InterPro" id="IPR000924">
    <property type="entry name" value="Glu/Gln-tRNA-synth"/>
</dbReference>
<dbReference type="InterPro" id="IPR020058">
    <property type="entry name" value="Glu/Gln-tRNA-synth_Ib_cat-dom"/>
</dbReference>
<dbReference type="InterPro" id="IPR020061">
    <property type="entry name" value="Glu_tRNA_lig_a-bdl"/>
</dbReference>
<dbReference type="InterPro" id="IPR049940">
    <property type="entry name" value="GluQ/Sye"/>
</dbReference>
<dbReference type="InterPro" id="IPR033910">
    <property type="entry name" value="GluRS_core"/>
</dbReference>
<dbReference type="InterPro" id="IPR014729">
    <property type="entry name" value="Rossmann-like_a/b/a_fold"/>
</dbReference>
<dbReference type="NCBIfam" id="TIGR00464">
    <property type="entry name" value="gltX_bact"/>
    <property type="match status" value="1"/>
</dbReference>
<dbReference type="PANTHER" id="PTHR43311">
    <property type="entry name" value="GLUTAMATE--TRNA LIGASE"/>
    <property type="match status" value="1"/>
</dbReference>
<dbReference type="PANTHER" id="PTHR43311:SF2">
    <property type="entry name" value="GLUTAMATE--TRNA LIGASE, MITOCHONDRIAL-RELATED"/>
    <property type="match status" value="1"/>
</dbReference>
<dbReference type="Pfam" id="PF19269">
    <property type="entry name" value="Anticodon_2"/>
    <property type="match status" value="1"/>
</dbReference>
<dbReference type="Pfam" id="PF00749">
    <property type="entry name" value="tRNA-synt_1c"/>
    <property type="match status" value="1"/>
</dbReference>
<dbReference type="PRINTS" id="PR00987">
    <property type="entry name" value="TRNASYNTHGLU"/>
</dbReference>
<dbReference type="SUPFAM" id="SSF48163">
    <property type="entry name" value="An anticodon-binding domain of class I aminoacyl-tRNA synthetases"/>
    <property type="match status" value="1"/>
</dbReference>
<dbReference type="SUPFAM" id="SSF52374">
    <property type="entry name" value="Nucleotidylyl transferase"/>
    <property type="match status" value="1"/>
</dbReference>
<name>SYE_AZOPC</name>
<reference key="1">
    <citation type="journal article" date="2008" name="Science">
        <title>Genome of an endosymbiont coupling N2 fixation to cellulolysis within RT protist cells in termite gut.</title>
        <authorList>
            <person name="Hongoh Y."/>
            <person name="Sharma V.K."/>
            <person name="Prakash T."/>
            <person name="Noda S."/>
            <person name="Toh H."/>
            <person name="Taylor T.D."/>
            <person name="Kudo T."/>
            <person name="Sakaki Y."/>
            <person name="Toyoda A."/>
            <person name="Hattori M."/>
            <person name="Ohkuma M."/>
        </authorList>
    </citation>
    <scope>NUCLEOTIDE SEQUENCE [LARGE SCALE GENOMIC DNA]</scope>
</reference>
<protein>
    <recommendedName>
        <fullName evidence="1">Glutamate--tRNA ligase</fullName>
        <ecNumber evidence="1">6.1.1.17</ecNumber>
    </recommendedName>
    <alternativeName>
        <fullName evidence="1">Glutamyl-tRNA synthetase</fullName>
        <shortName evidence="1">GluRS</shortName>
    </alternativeName>
</protein>
<feature type="chain" id="PRO_0000367610" description="Glutamate--tRNA ligase">
    <location>
        <begin position="1"/>
        <end position="494"/>
    </location>
</feature>
<feature type="short sequence motif" description="'HIGH' region" evidence="1">
    <location>
        <begin position="9"/>
        <end position="19"/>
    </location>
</feature>
<feature type="short sequence motif" description="'KMSKS' region" evidence="1">
    <location>
        <begin position="249"/>
        <end position="253"/>
    </location>
</feature>
<feature type="binding site" evidence="1">
    <location>
        <position position="252"/>
    </location>
    <ligand>
        <name>ATP</name>
        <dbReference type="ChEBI" id="CHEBI:30616"/>
    </ligand>
</feature>
<comment type="function">
    <text evidence="1">Catalyzes the attachment of glutamate to tRNA(Glu) in a two-step reaction: glutamate is first activated by ATP to form Glu-AMP and then transferred to the acceptor end of tRNA(Glu).</text>
</comment>
<comment type="catalytic activity">
    <reaction evidence="1">
        <text>tRNA(Glu) + L-glutamate + ATP = L-glutamyl-tRNA(Glu) + AMP + diphosphate</text>
        <dbReference type="Rhea" id="RHEA:23540"/>
        <dbReference type="Rhea" id="RHEA-COMP:9663"/>
        <dbReference type="Rhea" id="RHEA-COMP:9680"/>
        <dbReference type="ChEBI" id="CHEBI:29985"/>
        <dbReference type="ChEBI" id="CHEBI:30616"/>
        <dbReference type="ChEBI" id="CHEBI:33019"/>
        <dbReference type="ChEBI" id="CHEBI:78442"/>
        <dbReference type="ChEBI" id="CHEBI:78520"/>
        <dbReference type="ChEBI" id="CHEBI:456215"/>
        <dbReference type="EC" id="6.1.1.17"/>
    </reaction>
</comment>
<comment type="subunit">
    <text evidence="1">Monomer.</text>
</comment>
<comment type="subcellular location">
    <subcellularLocation>
        <location evidence="1">Cytoplasm</location>
    </subcellularLocation>
</comment>
<comment type="similarity">
    <text evidence="1">Belongs to the class-I aminoacyl-tRNA synthetase family. Glutamate--tRNA ligase type 1 subfamily.</text>
</comment>
<keyword id="KW-0030">Aminoacyl-tRNA synthetase</keyword>
<keyword id="KW-0067">ATP-binding</keyword>
<keyword id="KW-0963">Cytoplasm</keyword>
<keyword id="KW-0436">Ligase</keyword>
<keyword id="KW-0547">Nucleotide-binding</keyword>
<keyword id="KW-0648">Protein biosynthesis</keyword>
<keyword id="KW-1185">Reference proteome</keyword>